<sequence length="619" mass="69579">MAAQAAAAAQAAAAAQAAAAQAAQAEAAESWYLALLGFAEHFRTSSPPKIRLCVHCLQAVFPFKPPQRIEARTHLQLGSVLYHHTKNSEQARSHLEKAWLISQQIPQFEDVKFEAASLLSELYCQENSVDAAKPLLRKAIQISQQTPYWHCRLLFQLAQLHTLEKDLVSACDLLGVGAEYARVVGSEYTRALFLLSKGMLLLMERKLQEVHPLLTLCGQIVENWQGNPIQKESLRVFFLVLQVTHYLDAGQVKSVKPCLKQLQQCIQTISTLHDDEILPSNPADLFHWLPKEHMCVLVYLVTVMHSMQAGYLEKAQKYTDKALMQLEKLKMLDCSPILSSFQVILLEHIIMCRLVTGHKATALQEISQVCQLCQQSPRLFSNHAAQLHTLLGLYCVSVNCMDNAEAQFTTALRLTNHQELWAFIVTNLASVYIREGNRHQEVLYSLLERINPDHSFPVSSHCLRAAAFYVRGLFSFFQGRYNEAKRFLRETLKMSNAEDLNRLTACSLVLLGHIFYVLGNHRESNNMVVPAMQLASKIPDMSVQLWSSALLRDLNKACGNAMDAHEAAQMHQNFSQQLLQDHIEACSLPEHNLITWTDGPPPVQFQAQNGPNTSLASLL</sequence>
<comment type="function">
    <text evidence="2">Plays an important role in the loading of the cohesin complex on to DNA. Forms a heterodim. eric complex (also known as cohesin loading complex) with NIPBL/SCC2 which mediates the loading of the cohesin complex onto chromatin Plays a role in sister chromatid cohesion and normal progression through prometaphase.</text>
</comment>
<comment type="subunit">
    <text evidence="2">Heterodimerizes with MAU2/SCC2 to form the cohesin loading complex. The NIPBL-MAU2 heterodimer interacts with the SMC1A-SMC3 heterodimer and with the cohesin complex composed of SMC1A, SMC3, RAD21 and STAG1.</text>
</comment>
<comment type="subcellular location">
    <subcellularLocation>
        <location evidence="2">Nucleus</location>
        <location evidence="2">Nucleoplasm</location>
    </subcellularLocation>
    <subcellularLocation>
        <location evidence="3">Chromosome</location>
    </subcellularLocation>
    <subcellularLocation>
        <location evidence="2">Nucleus</location>
    </subcellularLocation>
    <text evidence="2">Binds to chromatin from the end of mitosis until prophase.</text>
</comment>
<comment type="alternative products">
    <event type="alternative splicing"/>
    <isoform>
        <id>Q9D2X5-1</id>
        <name>1</name>
        <sequence type="displayed"/>
    </isoform>
    <isoform>
        <id>Q9D2X5-2</id>
        <name>2</name>
        <sequence type="described" ref="VSP_037924"/>
    </isoform>
</comment>
<comment type="tissue specificity">
    <text evidence="3">Spermatocytes and oocytes (at protein level).</text>
</comment>
<comment type="similarity">
    <text evidence="6">Belongs to the SCC4/mau-2 family.</text>
</comment>
<comment type="sequence caution" evidence="6">
    <conflict type="erroneous initiation">
        <sequence resource="EMBL-CDS" id="AAH23401"/>
    </conflict>
    <text>Truncated N-terminus.</text>
</comment>
<protein>
    <recommendedName>
        <fullName>MAU2 chromatid cohesion factor homolog</fullName>
        <shortName>MAU-2</shortName>
    </recommendedName>
    <alternativeName>
        <fullName>Cohesin loading complex subunit SCC4 homolog</fullName>
    </alternativeName>
</protein>
<name>SCC4_MOUSE</name>
<feature type="chain" id="PRO_0000254549" description="MAU2 chromatid cohesion factor homolog">
    <location>
        <begin position="1"/>
        <end position="619"/>
    </location>
</feature>
<feature type="repeat" description="TPR 1">
    <location>
        <begin position="113"/>
        <end position="146"/>
    </location>
</feature>
<feature type="repeat" description="TPR 2">
    <location>
        <begin position="385"/>
        <end position="418"/>
    </location>
</feature>
<feature type="repeat" description="TPR 3">
    <location>
        <begin position="465"/>
        <end position="498"/>
    </location>
</feature>
<feature type="repeat" description="TPR 4">
    <location>
        <begin position="505"/>
        <end position="538"/>
    </location>
</feature>
<feature type="region of interest" description="Sufficient for interaction with NIPBL" evidence="1">
    <location>
        <begin position="1"/>
        <end position="121"/>
    </location>
</feature>
<feature type="splice variant" id="VSP_037924" description="In isoform 2." evidence="4 5">
    <location>
        <position position="442"/>
    </location>
</feature>
<feature type="sequence conflict" description="In Ref. 1; BAC33653." evidence="6" ref="1">
    <original>Q</original>
    <variation>H</variation>
    <location>
        <position position="308"/>
    </location>
</feature>
<feature type="sequence conflict" description="In Ref. 1; BAC38382." evidence="6" ref="1">
    <original>Q</original>
    <variation>R</variation>
    <location>
        <position position="325"/>
    </location>
</feature>
<gene>
    <name type="primary">Mau2</name>
    <name type="synonym">Kiaa0892</name>
    <name evidence="2" type="synonym">Scc4</name>
</gene>
<dbReference type="EMBL" id="AK018662">
    <property type="protein sequence ID" value="BAB31331.2"/>
    <property type="molecule type" value="mRNA"/>
</dbReference>
<dbReference type="EMBL" id="AK049277">
    <property type="protein sequence ID" value="BAC33653.1"/>
    <property type="molecule type" value="mRNA"/>
</dbReference>
<dbReference type="EMBL" id="AK081967">
    <property type="protein sequence ID" value="BAC38382.1"/>
    <property type="molecule type" value="mRNA"/>
</dbReference>
<dbReference type="EMBL" id="BC023401">
    <property type="protein sequence ID" value="AAH23401.1"/>
    <property type="status" value="ALT_INIT"/>
    <property type="molecule type" value="mRNA"/>
</dbReference>
<dbReference type="EMBL" id="BC125568">
    <property type="protein sequence ID" value="AAI25569.1"/>
    <property type="molecule type" value="mRNA"/>
</dbReference>
<dbReference type="EMBL" id="BC132139">
    <property type="protein sequence ID" value="AAI32140.1"/>
    <property type="molecule type" value="mRNA"/>
</dbReference>
<dbReference type="EMBL" id="BC144990">
    <property type="protein sequence ID" value="AAI44991.1"/>
    <property type="molecule type" value="mRNA"/>
</dbReference>
<dbReference type="EMBL" id="AK220358">
    <property type="protein sequence ID" value="BAD90246.1"/>
    <property type="molecule type" value="mRNA"/>
</dbReference>
<dbReference type="CCDS" id="CCDS40364.1">
    <molecule id="Q9D2X5-2"/>
</dbReference>
<dbReference type="RefSeq" id="NP_001161411.1">
    <property type="nucleotide sequence ID" value="NM_001167939.1"/>
</dbReference>
<dbReference type="RefSeq" id="NP_001363875.1">
    <molecule id="Q9D2X5-1"/>
    <property type="nucleotide sequence ID" value="NM_001376946.1"/>
</dbReference>
<dbReference type="RefSeq" id="NP_083269.4">
    <molecule id="Q9D2X5-2"/>
    <property type="nucleotide sequence ID" value="NM_028993.4"/>
</dbReference>
<dbReference type="RefSeq" id="XP_006509839.1">
    <property type="nucleotide sequence ID" value="XM_006509776.3"/>
</dbReference>
<dbReference type="BioGRID" id="216835">
    <property type="interactions" value="11"/>
</dbReference>
<dbReference type="FunCoup" id="Q9D2X5">
    <property type="interactions" value="4980"/>
</dbReference>
<dbReference type="IntAct" id="Q9D2X5">
    <property type="interactions" value="11"/>
</dbReference>
<dbReference type="MINT" id="Q9D2X5"/>
<dbReference type="STRING" id="10090.ENSMUSP00000148479"/>
<dbReference type="iPTMnet" id="Q9D2X5"/>
<dbReference type="PhosphoSitePlus" id="Q9D2X5"/>
<dbReference type="PaxDb" id="10090-ENSMUSP00000131966"/>
<dbReference type="PeptideAtlas" id="Q9D2X5"/>
<dbReference type="ProteomicsDB" id="255484">
    <molecule id="Q9D2X5-1"/>
</dbReference>
<dbReference type="ProteomicsDB" id="255485">
    <molecule id="Q9D2X5-2"/>
</dbReference>
<dbReference type="Pumba" id="Q9D2X5"/>
<dbReference type="Antibodypedia" id="28455">
    <property type="antibodies" value="37 antibodies from 16 providers"/>
</dbReference>
<dbReference type="DNASU" id="74549"/>
<dbReference type="Ensembl" id="ENSMUST00000050561.13">
    <molecule id="Q9D2X5-2"/>
    <property type="protein sequence ID" value="ENSMUSP00000054763.7"/>
    <property type="gene ID" value="ENSMUSG00000031858.18"/>
</dbReference>
<dbReference type="Ensembl" id="ENSMUST00000212451.2">
    <molecule id="Q9D2X5-1"/>
    <property type="protein sequence ID" value="ENSMUSP00000148601.2"/>
    <property type="gene ID" value="ENSMUSG00000031858.18"/>
</dbReference>
<dbReference type="GeneID" id="74549"/>
<dbReference type="KEGG" id="mmu:74549"/>
<dbReference type="UCSC" id="uc009lyj.2">
    <molecule id="Q9D2X5-1"/>
    <property type="organism name" value="mouse"/>
</dbReference>
<dbReference type="UCSC" id="uc009lyk.2">
    <molecule id="Q9D2X5-2"/>
    <property type="organism name" value="mouse"/>
</dbReference>
<dbReference type="AGR" id="MGI:1921799"/>
<dbReference type="CTD" id="23383"/>
<dbReference type="MGI" id="MGI:1921799">
    <property type="gene designation" value="Mau2"/>
</dbReference>
<dbReference type="VEuPathDB" id="HostDB:ENSMUSG00000031858"/>
<dbReference type="eggNOG" id="KOG2300">
    <property type="taxonomic scope" value="Eukaryota"/>
</dbReference>
<dbReference type="GeneTree" id="ENSGT00390000012198"/>
<dbReference type="HOGENOM" id="CLU_030238_0_0_1"/>
<dbReference type="InParanoid" id="Q9D2X5"/>
<dbReference type="OMA" id="QDAWYLS"/>
<dbReference type="OrthoDB" id="5565328at2759"/>
<dbReference type="PhylomeDB" id="Q9D2X5"/>
<dbReference type="Reactome" id="R-MMU-2470946">
    <property type="pathway name" value="Cohesin Loading onto Chromatin"/>
</dbReference>
<dbReference type="BioGRID-ORCS" id="74549">
    <property type="hits" value="19 hits in 78 CRISPR screens"/>
</dbReference>
<dbReference type="ChiTaRS" id="Mau2">
    <property type="organism name" value="mouse"/>
</dbReference>
<dbReference type="PRO" id="PR:Q9D2X5"/>
<dbReference type="Proteomes" id="UP000000589">
    <property type="component" value="Chromosome 8"/>
</dbReference>
<dbReference type="RNAct" id="Q9D2X5">
    <property type="molecule type" value="protein"/>
</dbReference>
<dbReference type="Bgee" id="ENSMUSG00000031858">
    <property type="expression patterns" value="Expressed in rostral migratory stream and 267 other cell types or tissues"/>
</dbReference>
<dbReference type="ExpressionAtlas" id="Q9D2X5">
    <property type="expression patterns" value="baseline and differential"/>
</dbReference>
<dbReference type="GO" id="GO:0000785">
    <property type="term" value="C:chromatin"/>
    <property type="evidence" value="ECO:0000314"/>
    <property type="project" value="MGI"/>
</dbReference>
<dbReference type="GO" id="GO:0005654">
    <property type="term" value="C:nucleoplasm"/>
    <property type="evidence" value="ECO:0000250"/>
    <property type="project" value="UniProtKB"/>
</dbReference>
<dbReference type="GO" id="GO:0005634">
    <property type="term" value="C:nucleus"/>
    <property type="evidence" value="ECO:0000250"/>
    <property type="project" value="UniProtKB"/>
</dbReference>
<dbReference type="GO" id="GO:0090694">
    <property type="term" value="C:Scc2-Scc4 cohesin loading complex"/>
    <property type="evidence" value="ECO:0000250"/>
    <property type="project" value="UniProtKB"/>
</dbReference>
<dbReference type="GO" id="GO:0032116">
    <property type="term" value="C:SMC loading complex"/>
    <property type="evidence" value="ECO:0000250"/>
    <property type="project" value="UniProtKB"/>
</dbReference>
<dbReference type="GO" id="GO:0051301">
    <property type="term" value="P:cell division"/>
    <property type="evidence" value="ECO:0007669"/>
    <property type="project" value="UniProtKB-KW"/>
</dbReference>
<dbReference type="GO" id="GO:0007059">
    <property type="term" value="P:chromosome segregation"/>
    <property type="evidence" value="ECO:0007669"/>
    <property type="project" value="UniProtKB-KW"/>
</dbReference>
<dbReference type="GO" id="GO:0034088">
    <property type="term" value="P:maintenance of mitotic sister chromatid cohesion"/>
    <property type="evidence" value="ECO:0000250"/>
    <property type="project" value="UniProtKB"/>
</dbReference>
<dbReference type="GO" id="GO:0007064">
    <property type="term" value="P:mitotic sister chromatid cohesion"/>
    <property type="evidence" value="ECO:0000250"/>
    <property type="project" value="UniProtKB"/>
</dbReference>
<dbReference type="FunFam" id="1.25.40.10:FF:000216">
    <property type="entry name" value="MAU2 chromatid cohesion factor homolog"/>
    <property type="match status" value="1"/>
</dbReference>
<dbReference type="Gene3D" id="1.25.40.10">
    <property type="entry name" value="Tetratricopeptide repeat domain"/>
    <property type="match status" value="2"/>
</dbReference>
<dbReference type="InterPro" id="IPR019440">
    <property type="entry name" value="MAU2"/>
</dbReference>
<dbReference type="InterPro" id="IPR011990">
    <property type="entry name" value="TPR-like_helical_dom_sf"/>
</dbReference>
<dbReference type="InterPro" id="IPR019734">
    <property type="entry name" value="TPR_rpt"/>
</dbReference>
<dbReference type="PANTHER" id="PTHR21394">
    <property type="entry name" value="MAU2 CHROMATID COHESION FACTOR HOMOLOG"/>
    <property type="match status" value="1"/>
</dbReference>
<dbReference type="Pfam" id="PF10345">
    <property type="entry name" value="Cohesin_load"/>
    <property type="match status" value="1"/>
</dbReference>
<dbReference type="SMART" id="SM00028">
    <property type="entry name" value="TPR"/>
    <property type="match status" value="3"/>
</dbReference>
<dbReference type="SUPFAM" id="SSF48452">
    <property type="entry name" value="TPR-like"/>
    <property type="match status" value="2"/>
</dbReference>
<proteinExistence type="evidence at protein level"/>
<reference key="1">
    <citation type="journal article" date="2005" name="Science">
        <title>The transcriptional landscape of the mammalian genome.</title>
        <authorList>
            <person name="Carninci P."/>
            <person name="Kasukawa T."/>
            <person name="Katayama S."/>
            <person name="Gough J."/>
            <person name="Frith M.C."/>
            <person name="Maeda N."/>
            <person name="Oyama R."/>
            <person name="Ravasi T."/>
            <person name="Lenhard B."/>
            <person name="Wells C."/>
            <person name="Kodzius R."/>
            <person name="Shimokawa K."/>
            <person name="Bajic V.B."/>
            <person name="Brenner S.E."/>
            <person name="Batalov S."/>
            <person name="Forrest A.R."/>
            <person name="Zavolan M."/>
            <person name="Davis M.J."/>
            <person name="Wilming L.G."/>
            <person name="Aidinis V."/>
            <person name="Allen J.E."/>
            <person name="Ambesi-Impiombato A."/>
            <person name="Apweiler R."/>
            <person name="Aturaliya R.N."/>
            <person name="Bailey T.L."/>
            <person name="Bansal M."/>
            <person name="Baxter L."/>
            <person name="Beisel K.W."/>
            <person name="Bersano T."/>
            <person name="Bono H."/>
            <person name="Chalk A.M."/>
            <person name="Chiu K.P."/>
            <person name="Choudhary V."/>
            <person name="Christoffels A."/>
            <person name="Clutterbuck D.R."/>
            <person name="Crowe M.L."/>
            <person name="Dalla E."/>
            <person name="Dalrymple B.P."/>
            <person name="de Bono B."/>
            <person name="Della Gatta G."/>
            <person name="di Bernardo D."/>
            <person name="Down T."/>
            <person name="Engstrom P."/>
            <person name="Fagiolini M."/>
            <person name="Faulkner G."/>
            <person name="Fletcher C.F."/>
            <person name="Fukushima T."/>
            <person name="Furuno M."/>
            <person name="Futaki S."/>
            <person name="Gariboldi M."/>
            <person name="Georgii-Hemming P."/>
            <person name="Gingeras T.R."/>
            <person name="Gojobori T."/>
            <person name="Green R.E."/>
            <person name="Gustincich S."/>
            <person name="Harbers M."/>
            <person name="Hayashi Y."/>
            <person name="Hensch T.K."/>
            <person name="Hirokawa N."/>
            <person name="Hill D."/>
            <person name="Huminiecki L."/>
            <person name="Iacono M."/>
            <person name="Ikeo K."/>
            <person name="Iwama A."/>
            <person name="Ishikawa T."/>
            <person name="Jakt M."/>
            <person name="Kanapin A."/>
            <person name="Katoh M."/>
            <person name="Kawasawa Y."/>
            <person name="Kelso J."/>
            <person name="Kitamura H."/>
            <person name="Kitano H."/>
            <person name="Kollias G."/>
            <person name="Krishnan S.P."/>
            <person name="Kruger A."/>
            <person name="Kummerfeld S.K."/>
            <person name="Kurochkin I.V."/>
            <person name="Lareau L.F."/>
            <person name="Lazarevic D."/>
            <person name="Lipovich L."/>
            <person name="Liu J."/>
            <person name="Liuni S."/>
            <person name="McWilliam S."/>
            <person name="Madan Babu M."/>
            <person name="Madera M."/>
            <person name="Marchionni L."/>
            <person name="Matsuda H."/>
            <person name="Matsuzawa S."/>
            <person name="Miki H."/>
            <person name="Mignone F."/>
            <person name="Miyake S."/>
            <person name="Morris K."/>
            <person name="Mottagui-Tabar S."/>
            <person name="Mulder N."/>
            <person name="Nakano N."/>
            <person name="Nakauchi H."/>
            <person name="Ng P."/>
            <person name="Nilsson R."/>
            <person name="Nishiguchi S."/>
            <person name="Nishikawa S."/>
            <person name="Nori F."/>
            <person name="Ohara O."/>
            <person name="Okazaki Y."/>
            <person name="Orlando V."/>
            <person name="Pang K.C."/>
            <person name="Pavan W.J."/>
            <person name="Pavesi G."/>
            <person name="Pesole G."/>
            <person name="Petrovsky N."/>
            <person name="Piazza S."/>
            <person name="Reed J."/>
            <person name="Reid J.F."/>
            <person name="Ring B.Z."/>
            <person name="Ringwald M."/>
            <person name="Rost B."/>
            <person name="Ruan Y."/>
            <person name="Salzberg S.L."/>
            <person name="Sandelin A."/>
            <person name="Schneider C."/>
            <person name="Schoenbach C."/>
            <person name="Sekiguchi K."/>
            <person name="Semple C.A."/>
            <person name="Seno S."/>
            <person name="Sessa L."/>
            <person name="Sheng Y."/>
            <person name="Shibata Y."/>
            <person name="Shimada H."/>
            <person name="Shimada K."/>
            <person name="Silva D."/>
            <person name="Sinclair B."/>
            <person name="Sperling S."/>
            <person name="Stupka E."/>
            <person name="Sugiura K."/>
            <person name="Sultana R."/>
            <person name="Takenaka Y."/>
            <person name="Taki K."/>
            <person name="Tammoja K."/>
            <person name="Tan S.L."/>
            <person name="Tang S."/>
            <person name="Taylor M.S."/>
            <person name="Tegner J."/>
            <person name="Teichmann S.A."/>
            <person name="Ueda H.R."/>
            <person name="van Nimwegen E."/>
            <person name="Verardo R."/>
            <person name="Wei C.L."/>
            <person name="Yagi K."/>
            <person name="Yamanishi H."/>
            <person name="Zabarovsky E."/>
            <person name="Zhu S."/>
            <person name="Zimmer A."/>
            <person name="Hide W."/>
            <person name="Bult C."/>
            <person name="Grimmond S.M."/>
            <person name="Teasdale R.D."/>
            <person name="Liu E.T."/>
            <person name="Brusic V."/>
            <person name="Quackenbush J."/>
            <person name="Wahlestedt C."/>
            <person name="Mattick J.S."/>
            <person name="Hume D.A."/>
            <person name="Kai C."/>
            <person name="Sasaki D."/>
            <person name="Tomaru Y."/>
            <person name="Fukuda S."/>
            <person name="Kanamori-Katayama M."/>
            <person name="Suzuki M."/>
            <person name="Aoki J."/>
            <person name="Arakawa T."/>
            <person name="Iida J."/>
            <person name="Imamura K."/>
            <person name="Itoh M."/>
            <person name="Kato T."/>
            <person name="Kawaji H."/>
            <person name="Kawagashira N."/>
            <person name="Kawashima T."/>
            <person name="Kojima M."/>
            <person name="Kondo S."/>
            <person name="Konno H."/>
            <person name="Nakano K."/>
            <person name="Ninomiya N."/>
            <person name="Nishio T."/>
            <person name="Okada M."/>
            <person name="Plessy C."/>
            <person name="Shibata K."/>
            <person name="Shiraki T."/>
            <person name="Suzuki S."/>
            <person name="Tagami M."/>
            <person name="Waki K."/>
            <person name="Watahiki A."/>
            <person name="Okamura-Oho Y."/>
            <person name="Suzuki H."/>
            <person name="Kawai J."/>
            <person name="Hayashizaki Y."/>
        </authorList>
    </citation>
    <scope>NUCLEOTIDE SEQUENCE [LARGE SCALE MRNA] (ISOFORM 2)</scope>
    <source>
        <strain>C57BL/6J</strain>
        <tissue>Brain</tissue>
        <tissue>Cecum</tissue>
        <tissue>Head</tissue>
    </source>
</reference>
<reference key="2">
    <citation type="journal article" date="2004" name="Genome Res.">
        <title>The status, quality, and expansion of the NIH full-length cDNA project: the Mammalian Gene Collection (MGC).</title>
        <authorList>
            <consortium name="The MGC Project Team"/>
        </authorList>
    </citation>
    <scope>NUCLEOTIDE SEQUENCE [LARGE SCALE MRNA] (ISOFORMS 1 AND 2)</scope>
    <source>
        <strain>FVB/N</strain>
        <tissue>Brain</tissue>
        <tissue>Kidney</tissue>
    </source>
</reference>
<reference key="3">
    <citation type="submission" date="2005-02" db="EMBL/GenBank/DDBJ databases">
        <title>Prediction of the coding sequences of mouse homologues of KIAA gene. The complete nucleotide sequences of mouse KIAA-homologous cDNAs identified by screening of terminal sequences of cDNA clones randomly sampled from size-fractionated libraries.</title>
        <authorList>
            <person name="Okazaki N."/>
            <person name="Kikuno R.F."/>
            <person name="Ohara R."/>
            <person name="Inamoto S."/>
            <person name="Nagase T."/>
            <person name="Ohara O."/>
            <person name="Koga H."/>
        </authorList>
    </citation>
    <scope>NUCLEOTIDE SEQUENCE [LARGE SCALE MRNA] OF 502-619 (ISOFORMS 1/2)</scope>
</reference>
<reference key="4">
    <citation type="journal article" date="2010" name="Cell">
        <title>A tissue-specific atlas of mouse protein phosphorylation and expression.</title>
        <authorList>
            <person name="Huttlin E.L."/>
            <person name="Jedrychowski M.P."/>
            <person name="Elias J.E."/>
            <person name="Goswami T."/>
            <person name="Rad R."/>
            <person name="Beausoleil S.A."/>
            <person name="Villen J."/>
            <person name="Haas W."/>
            <person name="Sowa M.E."/>
            <person name="Gygi S.P."/>
        </authorList>
    </citation>
    <scope>IDENTIFICATION BY MASS SPECTROMETRY [LARGE SCALE ANALYSIS]</scope>
    <source>
        <tissue>Spleen</tissue>
    </source>
</reference>
<reference key="5">
    <citation type="journal article" date="2014" name="Chromosoma">
        <title>Localisation of the SMC loading complex Nipbl/Mau2 during mammalian meiotic prophase I.</title>
        <authorList>
            <person name="Visnes T."/>
            <person name="Giordano F."/>
            <person name="Kuznetsova A."/>
            <person name="Suja J.A."/>
            <person name="Lander A.D."/>
            <person name="Calof A.L."/>
            <person name="Stroem L."/>
        </authorList>
    </citation>
    <scope>SUBCELLULAR LOCATION</scope>
    <scope>TISSUE SPECIFICITY</scope>
</reference>
<evidence type="ECO:0000250" key="1"/>
<evidence type="ECO:0000250" key="2">
    <source>
        <dbReference type="UniProtKB" id="Q9Y6X3"/>
    </source>
</evidence>
<evidence type="ECO:0000269" key="3">
    <source>
    </source>
</evidence>
<evidence type="ECO:0000303" key="4">
    <source>
    </source>
</evidence>
<evidence type="ECO:0000303" key="5">
    <source>
    </source>
</evidence>
<evidence type="ECO:0000305" key="6"/>
<keyword id="KW-0025">Alternative splicing</keyword>
<keyword id="KW-0131">Cell cycle</keyword>
<keyword id="KW-0132">Cell division</keyword>
<keyword id="KW-0158">Chromosome</keyword>
<keyword id="KW-0159">Chromosome partition</keyword>
<keyword id="KW-0498">Mitosis</keyword>
<keyword id="KW-0539">Nucleus</keyword>
<keyword id="KW-1185">Reference proteome</keyword>
<keyword id="KW-0677">Repeat</keyword>
<keyword id="KW-0802">TPR repeat</keyword>
<organism>
    <name type="scientific">Mus musculus</name>
    <name type="common">Mouse</name>
    <dbReference type="NCBI Taxonomy" id="10090"/>
    <lineage>
        <taxon>Eukaryota</taxon>
        <taxon>Metazoa</taxon>
        <taxon>Chordata</taxon>
        <taxon>Craniata</taxon>
        <taxon>Vertebrata</taxon>
        <taxon>Euteleostomi</taxon>
        <taxon>Mammalia</taxon>
        <taxon>Eutheria</taxon>
        <taxon>Euarchontoglires</taxon>
        <taxon>Glires</taxon>
        <taxon>Rodentia</taxon>
        <taxon>Myomorpha</taxon>
        <taxon>Muroidea</taxon>
        <taxon>Muridae</taxon>
        <taxon>Murinae</taxon>
        <taxon>Mus</taxon>
        <taxon>Mus</taxon>
    </lineage>
</organism>
<accession>Q9D2X5</accession>
<accession>B7ZN38</accession>
<accession>Q059Q4</accession>
<accession>Q5DU12</accession>
<accession>Q78IR4</accession>
<accession>Q8BUW9</accession>
<accession>Q8BX04</accession>